<accession>P92209</accession>
<sequence>MVREEVAGSTQTLQWKCVESRVDSKRLYYGRFILSPLRKGQADTVGIALRRALLGEIEGTCITRAKFGSVPHEYSTIAGIEESVQEILLNLKEIVLRSNLYGVRDASICVKGPRYITAQDIILPPSVEIVDRAQPIANLTEPIDFCIDLQIKRDRGYQTELRKNYQDGSYPIDAVSMPVRNVNYSIFSCGNGNEKHEILFLEIWTNGSLTPKEALYEASRNLIDLFLPFLHAEEEGTSFEENKNRFTPPLFTFQKRLTNLKKNKKGIPLNCIFIDQLELTSRTYNCLKRANIHTLLDLLSKTEEDLLRIDSFRMEDRKHIWDTLEKHLPIDLLKNKLSF</sequence>
<name>RPOA_AGRCR</name>
<reference key="1">
    <citation type="journal article" date="1997" name="Mol. Phylogenet. Evol.">
        <title>Phylogenetic analysis of the Triticeae (Poaceae) based on rpoA sequence data.</title>
        <authorList>
            <person name="Petersen G."/>
            <person name="Seberg O."/>
        </authorList>
    </citation>
    <scope>NUCLEOTIDE SEQUENCE [GENOMIC DNA]</scope>
    <source>
        <strain>H4349</strain>
        <tissue>Leaf</tissue>
    </source>
</reference>
<protein>
    <recommendedName>
        <fullName evidence="1">DNA-directed RNA polymerase subunit alpha</fullName>
        <shortName evidence="1">PEP</shortName>
        <ecNumber evidence="1">2.7.7.6</ecNumber>
    </recommendedName>
    <alternativeName>
        <fullName evidence="1">Plastid-encoded RNA polymerase subunit alpha</fullName>
        <shortName evidence="1">RNA polymerase subunit alpha</shortName>
    </alternativeName>
</protein>
<keyword id="KW-0150">Chloroplast</keyword>
<keyword id="KW-0240">DNA-directed RNA polymerase</keyword>
<keyword id="KW-0548">Nucleotidyltransferase</keyword>
<keyword id="KW-0934">Plastid</keyword>
<keyword id="KW-0804">Transcription</keyword>
<keyword id="KW-0808">Transferase</keyword>
<feature type="chain" id="PRO_0000175437" description="DNA-directed RNA polymerase subunit alpha">
    <location>
        <begin position="1"/>
        <end position="339"/>
    </location>
</feature>
<feature type="region of interest" description="Alpha N-terminal domain (alpha-NTD)" evidence="1">
    <location>
        <begin position="1"/>
        <end position="233"/>
    </location>
</feature>
<feature type="region of interest" description="Alpha C-terminal domain (alpha-CTD)" evidence="1">
    <location>
        <begin position="264"/>
        <end position="339"/>
    </location>
</feature>
<dbReference type="EC" id="2.7.7.6" evidence="1"/>
<dbReference type="EMBL" id="Z77771">
    <property type="protein sequence ID" value="CAB01390.1"/>
    <property type="molecule type" value="Genomic_DNA"/>
</dbReference>
<dbReference type="SMR" id="P92209"/>
<dbReference type="GO" id="GO:0009507">
    <property type="term" value="C:chloroplast"/>
    <property type="evidence" value="ECO:0007669"/>
    <property type="project" value="UniProtKB-SubCell"/>
</dbReference>
<dbReference type="GO" id="GO:0000428">
    <property type="term" value="C:DNA-directed RNA polymerase complex"/>
    <property type="evidence" value="ECO:0007669"/>
    <property type="project" value="UniProtKB-KW"/>
</dbReference>
<dbReference type="GO" id="GO:0005739">
    <property type="term" value="C:mitochondrion"/>
    <property type="evidence" value="ECO:0007669"/>
    <property type="project" value="GOC"/>
</dbReference>
<dbReference type="GO" id="GO:0003677">
    <property type="term" value="F:DNA binding"/>
    <property type="evidence" value="ECO:0007669"/>
    <property type="project" value="UniProtKB-UniRule"/>
</dbReference>
<dbReference type="GO" id="GO:0003899">
    <property type="term" value="F:DNA-directed RNA polymerase activity"/>
    <property type="evidence" value="ECO:0007669"/>
    <property type="project" value="UniProtKB-UniRule"/>
</dbReference>
<dbReference type="GO" id="GO:0046983">
    <property type="term" value="F:protein dimerization activity"/>
    <property type="evidence" value="ECO:0007669"/>
    <property type="project" value="InterPro"/>
</dbReference>
<dbReference type="GO" id="GO:0006351">
    <property type="term" value="P:DNA-templated transcription"/>
    <property type="evidence" value="ECO:0007669"/>
    <property type="project" value="UniProtKB-UniRule"/>
</dbReference>
<dbReference type="CDD" id="cd06928">
    <property type="entry name" value="RNAP_alpha_NTD"/>
    <property type="match status" value="1"/>
</dbReference>
<dbReference type="FunFam" id="2.170.120.12:FF:000001">
    <property type="entry name" value="DNA-directed RNA polymerase subunit alpha"/>
    <property type="match status" value="1"/>
</dbReference>
<dbReference type="Gene3D" id="1.10.150.20">
    <property type="entry name" value="5' to 3' exonuclease, C-terminal subdomain"/>
    <property type="match status" value="1"/>
</dbReference>
<dbReference type="Gene3D" id="2.170.120.12">
    <property type="entry name" value="DNA-directed RNA polymerase, insert domain"/>
    <property type="match status" value="1"/>
</dbReference>
<dbReference type="Gene3D" id="3.30.1360.10">
    <property type="entry name" value="RNA polymerase, RBP11-like subunit"/>
    <property type="match status" value="1"/>
</dbReference>
<dbReference type="HAMAP" id="MF_00059">
    <property type="entry name" value="RNApol_bact_RpoA"/>
    <property type="match status" value="1"/>
</dbReference>
<dbReference type="InterPro" id="IPR011262">
    <property type="entry name" value="DNA-dir_RNA_pol_insert"/>
</dbReference>
<dbReference type="InterPro" id="IPR011263">
    <property type="entry name" value="DNA-dir_RNA_pol_RpoA/D/Rpb3"/>
</dbReference>
<dbReference type="InterPro" id="IPR011773">
    <property type="entry name" value="DNA-dir_RpoA"/>
</dbReference>
<dbReference type="InterPro" id="IPR036603">
    <property type="entry name" value="RBP11-like"/>
</dbReference>
<dbReference type="InterPro" id="IPR011260">
    <property type="entry name" value="RNAP_asu_C"/>
</dbReference>
<dbReference type="InterPro" id="IPR036643">
    <property type="entry name" value="RNApol_insert_sf"/>
</dbReference>
<dbReference type="NCBIfam" id="TIGR02027">
    <property type="entry name" value="rpoA"/>
    <property type="match status" value="1"/>
</dbReference>
<dbReference type="Pfam" id="PF01000">
    <property type="entry name" value="RNA_pol_A_bac"/>
    <property type="match status" value="1"/>
</dbReference>
<dbReference type="Pfam" id="PF03118">
    <property type="entry name" value="RNA_pol_A_CTD"/>
    <property type="match status" value="1"/>
</dbReference>
<dbReference type="Pfam" id="PF01193">
    <property type="entry name" value="RNA_pol_L"/>
    <property type="match status" value="1"/>
</dbReference>
<dbReference type="SMART" id="SM00662">
    <property type="entry name" value="RPOLD"/>
    <property type="match status" value="1"/>
</dbReference>
<dbReference type="SUPFAM" id="SSF47789">
    <property type="entry name" value="C-terminal domain of RNA polymerase alpha subunit"/>
    <property type="match status" value="1"/>
</dbReference>
<dbReference type="SUPFAM" id="SSF56553">
    <property type="entry name" value="Insert subdomain of RNA polymerase alpha subunit"/>
    <property type="match status" value="1"/>
</dbReference>
<dbReference type="SUPFAM" id="SSF55257">
    <property type="entry name" value="RBP11-like subunits of RNA polymerase"/>
    <property type="match status" value="1"/>
</dbReference>
<organism>
    <name type="scientific">Agropyron cristatum</name>
    <name type="common">Crested wheatgrass</name>
    <name type="synonym">Bromus cristatus</name>
    <dbReference type="NCBI Taxonomy" id="4593"/>
    <lineage>
        <taxon>Eukaryota</taxon>
        <taxon>Viridiplantae</taxon>
        <taxon>Streptophyta</taxon>
        <taxon>Embryophyta</taxon>
        <taxon>Tracheophyta</taxon>
        <taxon>Spermatophyta</taxon>
        <taxon>Magnoliopsida</taxon>
        <taxon>Liliopsida</taxon>
        <taxon>Poales</taxon>
        <taxon>Poaceae</taxon>
        <taxon>BOP clade</taxon>
        <taxon>Pooideae</taxon>
        <taxon>Triticodae</taxon>
        <taxon>Triticeae</taxon>
        <taxon>Hordeinae</taxon>
        <taxon>Agropyron</taxon>
    </lineage>
</organism>
<comment type="function">
    <text evidence="1">DNA-dependent RNA polymerase catalyzes the transcription of DNA into RNA using the four ribonucleoside triphosphates as substrates.</text>
</comment>
<comment type="catalytic activity">
    <reaction evidence="1">
        <text>RNA(n) + a ribonucleoside 5'-triphosphate = RNA(n+1) + diphosphate</text>
        <dbReference type="Rhea" id="RHEA:21248"/>
        <dbReference type="Rhea" id="RHEA-COMP:14527"/>
        <dbReference type="Rhea" id="RHEA-COMP:17342"/>
        <dbReference type="ChEBI" id="CHEBI:33019"/>
        <dbReference type="ChEBI" id="CHEBI:61557"/>
        <dbReference type="ChEBI" id="CHEBI:140395"/>
        <dbReference type="EC" id="2.7.7.6"/>
    </reaction>
</comment>
<comment type="subunit">
    <text evidence="1">In plastids the minimal PEP RNA polymerase catalytic core is composed of four subunits: alpha, beta, beta', and beta''. When a (nuclear-encoded) sigma factor is associated with the core the holoenzyme is formed, which can initiate transcription.</text>
</comment>
<comment type="subcellular location">
    <subcellularLocation>
        <location>Plastid</location>
        <location>Chloroplast</location>
    </subcellularLocation>
</comment>
<comment type="domain">
    <text evidence="1">The N-terminal domain is essential for RNAP assembly and basal transcription, whereas the C-terminal domain is involved in interaction with transcriptional regulators and with upstream promoter elements.</text>
</comment>
<comment type="similarity">
    <text evidence="1">Belongs to the RNA polymerase alpha chain family.</text>
</comment>
<proteinExistence type="inferred from homology"/>
<evidence type="ECO:0000255" key="1">
    <source>
        <dbReference type="HAMAP-Rule" id="MF_00059"/>
    </source>
</evidence>
<gene>
    <name evidence="1" type="primary">rpoA</name>
</gene>
<geneLocation type="chloroplast"/>